<proteinExistence type="inferred from homology"/>
<feature type="chain" id="PRO_1000136102" description="Glycerol-3-phosphate acyltransferase">
    <location>
        <begin position="1"/>
        <end position="192"/>
    </location>
</feature>
<feature type="transmembrane region" description="Helical" evidence="1">
    <location>
        <begin position="1"/>
        <end position="21"/>
    </location>
</feature>
<feature type="transmembrane region" description="Helical" evidence="1">
    <location>
        <begin position="51"/>
        <end position="71"/>
    </location>
</feature>
<feature type="transmembrane region" description="Helical" evidence="1">
    <location>
        <begin position="78"/>
        <end position="98"/>
    </location>
</feature>
<feature type="transmembrane region" description="Helical" evidence="1">
    <location>
        <begin position="112"/>
        <end position="132"/>
    </location>
</feature>
<feature type="transmembrane region" description="Helical" evidence="1">
    <location>
        <begin position="155"/>
        <end position="175"/>
    </location>
</feature>
<name>PLSY_MYXXD</name>
<protein>
    <recommendedName>
        <fullName evidence="1">Glycerol-3-phosphate acyltransferase</fullName>
    </recommendedName>
    <alternativeName>
        <fullName evidence="1">Acyl-PO4 G3P acyltransferase</fullName>
    </alternativeName>
    <alternativeName>
        <fullName evidence="1">Acyl-phosphate--glycerol-3-phosphate acyltransferase</fullName>
    </alternativeName>
    <alternativeName>
        <fullName evidence="1">G3P acyltransferase</fullName>
        <shortName evidence="1">GPAT</shortName>
        <ecNumber evidence="1">2.3.1.275</ecNumber>
    </alternativeName>
    <alternativeName>
        <fullName evidence="1">Lysophosphatidic acid synthase</fullName>
        <shortName evidence="1">LPA synthase</shortName>
    </alternativeName>
</protein>
<comment type="function">
    <text evidence="1">Catalyzes the transfer of an acyl group from acyl-phosphate (acyl-PO(4)) to glycerol-3-phosphate (G3P) to form lysophosphatidic acid (LPA). This enzyme utilizes acyl-phosphate as fatty acyl donor, but not acyl-CoA or acyl-ACP.</text>
</comment>
<comment type="catalytic activity">
    <reaction evidence="1">
        <text>an acyl phosphate + sn-glycerol 3-phosphate = a 1-acyl-sn-glycero-3-phosphate + phosphate</text>
        <dbReference type="Rhea" id="RHEA:34075"/>
        <dbReference type="ChEBI" id="CHEBI:43474"/>
        <dbReference type="ChEBI" id="CHEBI:57597"/>
        <dbReference type="ChEBI" id="CHEBI:57970"/>
        <dbReference type="ChEBI" id="CHEBI:59918"/>
        <dbReference type="EC" id="2.3.1.275"/>
    </reaction>
</comment>
<comment type="pathway">
    <text evidence="1">Lipid metabolism; phospholipid metabolism.</text>
</comment>
<comment type="subunit">
    <text evidence="1">Probably interacts with PlsX.</text>
</comment>
<comment type="subcellular location">
    <subcellularLocation>
        <location evidence="1">Cell inner membrane</location>
        <topology evidence="1">Multi-pass membrane protein</topology>
    </subcellularLocation>
</comment>
<comment type="similarity">
    <text evidence="1">Belongs to the PlsY family.</text>
</comment>
<evidence type="ECO:0000255" key="1">
    <source>
        <dbReference type="HAMAP-Rule" id="MF_01043"/>
    </source>
</evidence>
<reference key="1">
    <citation type="journal article" date="2006" name="Proc. Natl. Acad. Sci. U.S.A.">
        <title>Evolution of sensory complexity recorded in a myxobacterial genome.</title>
        <authorList>
            <person name="Goldman B.S."/>
            <person name="Nierman W.C."/>
            <person name="Kaiser D."/>
            <person name="Slater S.C."/>
            <person name="Durkin A.S."/>
            <person name="Eisen J.A."/>
            <person name="Ronning C.M."/>
            <person name="Barbazuk W.B."/>
            <person name="Blanchard M."/>
            <person name="Field C."/>
            <person name="Halling C."/>
            <person name="Hinkle G."/>
            <person name="Iartchuk O."/>
            <person name="Kim H.S."/>
            <person name="Mackenzie C."/>
            <person name="Madupu R."/>
            <person name="Miller N."/>
            <person name="Shvartsbeyn A."/>
            <person name="Sullivan S.A."/>
            <person name="Vaudin M."/>
            <person name="Wiegand R."/>
            <person name="Kaplan H.B."/>
        </authorList>
    </citation>
    <scope>NUCLEOTIDE SEQUENCE [LARGE SCALE GENOMIC DNA]</scope>
    <source>
        <strain>DK1622</strain>
    </source>
</reference>
<organism>
    <name type="scientific">Myxococcus xanthus (strain DK1622)</name>
    <dbReference type="NCBI Taxonomy" id="246197"/>
    <lineage>
        <taxon>Bacteria</taxon>
        <taxon>Pseudomonadati</taxon>
        <taxon>Myxococcota</taxon>
        <taxon>Myxococcia</taxon>
        <taxon>Myxococcales</taxon>
        <taxon>Cystobacterineae</taxon>
        <taxon>Myxococcaceae</taxon>
        <taxon>Myxococcus</taxon>
    </lineage>
</organism>
<accession>Q1DCA9</accession>
<sequence length="192" mass="19678">MTSALVLLGYLAGSIPFGVLLTRWLRGVDVRTGGSGNIGATNVTRVAGKKLGAVVLLLDAIKGALPVVLAVRLLPDAPTVHVAVGLAAVLGHIYPVWLKLQGGKGVATALGVLLVLVPQAALAAALVYVAVFAVSRVSSLGSLAAGATAVGTSALTARAVEYAGLSALLFALMLWTHRGNILRLARRTERRF</sequence>
<dbReference type="EC" id="2.3.1.275" evidence="1"/>
<dbReference type="EMBL" id="CP000113">
    <property type="protein sequence ID" value="ABF89362.1"/>
    <property type="molecule type" value="Genomic_DNA"/>
</dbReference>
<dbReference type="RefSeq" id="WP_011551573.1">
    <property type="nucleotide sequence ID" value="NC_008095.1"/>
</dbReference>
<dbReference type="SMR" id="Q1DCA9"/>
<dbReference type="STRING" id="246197.MXAN_1457"/>
<dbReference type="EnsemblBacteria" id="ABF89362">
    <property type="protein sequence ID" value="ABF89362"/>
    <property type="gene ID" value="MXAN_1457"/>
</dbReference>
<dbReference type="GeneID" id="41358903"/>
<dbReference type="KEGG" id="mxa:MXAN_1457"/>
<dbReference type="eggNOG" id="COG0344">
    <property type="taxonomic scope" value="Bacteria"/>
</dbReference>
<dbReference type="HOGENOM" id="CLU_081254_0_0_7"/>
<dbReference type="OrthoDB" id="9777124at2"/>
<dbReference type="UniPathway" id="UPA00085"/>
<dbReference type="Proteomes" id="UP000002402">
    <property type="component" value="Chromosome"/>
</dbReference>
<dbReference type="GO" id="GO:0005886">
    <property type="term" value="C:plasma membrane"/>
    <property type="evidence" value="ECO:0007669"/>
    <property type="project" value="UniProtKB-SubCell"/>
</dbReference>
<dbReference type="GO" id="GO:0043772">
    <property type="term" value="F:acyl-phosphate glycerol-3-phosphate acyltransferase activity"/>
    <property type="evidence" value="ECO:0007669"/>
    <property type="project" value="UniProtKB-UniRule"/>
</dbReference>
<dbReference type="GO" id="GO:0008654">
    <property type="term" value="P:phospholipid biosynthetic process"/>
    <property type="evidence" value="ECO:0007669"/>
    <property type="project" value="UniProtKB-UniRule"/>
</dbReference>
<dbReference type="HAMAP" id="MF_01043">
    <property type="entry name" value="PlsY"/>
    <property type="match status" value="1"/>
</dbReference>
<dbReference type="InterPro" id="IPR003811">
    <property type="entry name" value="G3P_acylTferase_PlsY"/>
</dbReference>
<dbReference type="NCBIfam" id="TIGR00023">
    <property type="entry name" value="glycerol-3-phosphate 1-O-acyltransferase PlsY"/>
    <property type="match status" value="1"/>
</dbReference>
<dbReference type="PANTHER" id="PTHR30309:SF0">
    <property type="entry name" value="GLYCEROL-3-PHOSPHATE ACYLTRANSFERASE-RELATED"/>
    <property type="match status" value="1"/>
</dbReference>
<dbReference type="PANTHER" id="PTHR30309">
    <property type="entry name" value="INNER MEMBRANE PROTEIN YGIH"/>
    <property type="match status" value="1"/>
</dbReference>
<dbReference type="Pfam" id="PF02660">
    <property type="entry name" value="G3P_acyltransf"/>
    <property type="match status" value="1"/>
</dbReference>
<dbReference type="SMART" id="SM01207">
    <property type="entry name" value="G3P_acyltransf"/>
    <property type="match status" value="1"/>
</dbReference>
<gene>
    <name evidence="1" type="primary">plsY</name>
    <name type="ordered locus">MXAN_1457</name>
</gene>
<keyword id="KW-0997">Cell inner membrane</keyword>
<keyword id="KW-1003">Cell membrane</keyword>
<keyword id="KW-0444">Lipid biosynthesis</keyword>
<keyword id="KW-0443">Lipid metabolism</keyword>
<keyword id="KW-0472">Membrane</keyword>
<keyword id="KW-0594">Phospholipid biosynthesis</keyword>
<keyword id="KW-1208">Phospholipid metabolism</keyword>
<keyword id="KW-1185">Reference proteome</keyword>
<keyword id="KW-0808">Transferase</keyword>
<keyword id="KW-0812">Transmembrane</keyword>
<keyword id="KW-1133">Transmembrane helix</keyword>